<feature type="chain" id="PRO_0000128738" description="Probable malate:quinone oxidoreductase 2">
    <location>
        <begin position="1"/>
        <end position="498"/>
    </location>
</feature>
<keyword id="KW-0274">FAD</keyword>
<keyword id="KW-0285">Flavoprotein</keyword>
<keyword id="KW-0560">Oxidoreductase</keyword>
<keyword id="KW-0816">Tricarboxylic acid cycle</keyword>
<gene>
    <name evidence="1" type="primary">mqo2</name>
    <name type="ordered locus">SACOL2623</name>
</gene>
<accession>Q5HCU5</accession>
<organism>
    <name type="scientific">Staphylococcus aureus (strain COL)</name>
    <dbReference type="NCBI Taxonomy" id="93062"/>
    <lineage>
        <taxon>Bacteria</taxon>
        <taxon>Bacillati</taxon>
        <taxon>Bacillota</taxon>
        <taxon>Bacilli</taxon>
        <taxon>Bacillales</taxon>
        <taxon>Staphylococcaceae</taxon>
        <taxon>Staphylococcus</taxon>
    </lineage>
</organism>
<evidence type="ECO:0000255" key="1">
    <source>
        <dbReference type="HAMAP-Rule" id="MF_00212"/>
    </source>
</evidence>
<proteinExistence type="inferred from homology"/>
<dbReference type="EC" id="1.1.5.4" evidence="1"/>
<dbReference type="EMBL" id="CP000046">
    <property type="protein sequence ID" value="AAW38622.1"/>
    <property type="molecule type" value="Genomic_DNA"/>
</dbReference>
<dbReference type="SMR" id="Q5HCU5"/>
<dbReference type="KEGG" id="sac:SACOL2623"/>
<dbReference type="HOGENOM" id="CLU_028151_0_0_9"/>
<dbReference type="UniPathway" id="UPA00223">
    <property type="reaction ID" value="UER01008"/>
</dbReference>
<dbReference type="PHI-base" id="PHI:6191"/>
<dbReference type="Proteomes" id="UP000000530">
    <property type="component" value="Chromosome"/>
</dbReference>
<dbReference type="GO" id="GO:0047545">
    <property type="term" value="F:2-hydroxyglutarate dehydrogenase activity"/>
    <property type="evidence" value="ECO:0007669"/>
    <property type="project" value="TreeGrafter"/>
</dbReference>
<dbReference type="GO" id="GO:0008924">
    <property type="term" value="F:L-malate dehydrogenase (quinone) activity"/>
    <property type="evidence" value="ECO:0007669"/>
    <property type="project" value="UniProtKB-UniRule"/>
</dbReference>
<dbReference type="GO" id="GO:0006099">
    <property type="term" value="P:tricarboxylic acid cycle"/>
    <property type="evidence" value="ECO:0007669"/>
    <property type="project" value="UniProtKB-UniRule"/>
</dbReference>
<dbReference type="Gene3D" id="3.30.9.10">
    <property type="entry name" value="D-Amino Acid Oxidase, subunit A, domain 2"/>
    <property type="match status" value="1"/>
</dbReference>
<dbReference type="Gene3D" id="3.50.50.60">
    <property type="entry name" value="FAD/NAD(P)-binding domain"/>
    <property type="match status" value="1"/>
</dbReference>
<dbReference type="HAMAP" id="MF_00212">
    <property type="entry name" value="MQO"/>
    <property type="match status" value="1"/>
</dbReference>
<dbReference type="InterPro" id="IPR036188">
    <property type="entry name" value="FAD/NAD-bd_sf"/>
</dbReference>
<dbReference type="InterPro" id="IPR006231">
    <property type="entry name" value="MQO"/>
</dbReference>
<dbReference type="NCBIfam" id="NF040844">
    <property type="entry name" value="Lac_Quin_Ox_NO"/>
    <property type="match status" value="1"/>
</dbReference>
<dbReference type="NCBIfam" id="TIGR01320">
    <property type="entry name" value="mal_quin_oxido"/>
    <property type="match status" value="1"/>
</dbReference>
<dbReference type="NCBIfam" id="NF003606">
    <property type="entry name" value="PRK05257.2-1"/>
    <property type="match status" value="1"/>
</dbReference>
<dbReference type="NCBIfam" id="NF003611">
    <property type="entry name" value="PRK05257.3-2"/>
    <property type="match status" value="1"/>
</dbReference>
<dbReference type="NCBIfam" id="NF009875">
    <property type="entry name" value="PRK13339.1"/>
    <property type="match status" value="1"/>
</dbReference>
<dbReference type="PANTHER" id="PTHR43104">
    <property type="entry name" value="L-2-HYDROXYGLUTARATE DEHYDROGENASE, MITOCHONDRIAL"/>
    <property type="match status" value="1"/>
</dbReference>
<dbReference type="PANTHER" id="PTHR43104:SF2">
    <property type="entry name" value="L-2-HYDROXYGLUTARATE DEHYDROGENASE, MITOCHONDRIAL"/>
    <property type="match status" value="1"/>
</dbReference>
<dbReference type="Pfam" id="PF06039">
    <property type="entry name" value="Mqo"/>
    <property type="match status" value="1"/>
</dbReference>
<dbReference type="SUPFAM" id="SSF51905">
    <property type="entry name" value="FAD/NAD(P)-binding domain"/>
    <property type="match status" value="1"/>
</dbReference>
<protein>
    <recommendedName>
        <fullName evidence="1">Probable malate:quinone oxidoreductase 2</fullName>
        <ecNumber evidence="1">1.1.5.4</ecNumber>
    </recommendedName>
    <alternativeName>
        <fullName evidence="1">MQO 2</fullName>
    </alternativeName>
    <alternativeName>
        <fullName evidence="1">Malate dehydrogenase [quinone] 2</fullName>
    </alternativeName>
</protein>
<name>MQO2_STAAC</name>
<reference key="1">
    <citation type="journal article" date="2005" name="J. Bacteriol.">
        <title>Insights on evolution of virulence and resistance from the complete genome analysis of an early methicillin-resistant Staphylococcus aureus strain and a biofilm-producing methicillin-resistant Staphylococcus epidermidis strain.</title>
        <authorList>
            <person name="Gill S.R."/>
            <person name="Fouts D.E."/>
            <person name="Archer G.L."/>
            <person name="Mongodin E.F."/>
            <person name="DeBoy R.T."/>
            <person name="Ravel J."/>
            <person name="Paulsen I.T."/>
            <person name="Kolonay J.F."/>
            <person name="Brinkac L.M."/>
            <person name="Beanan M.J."/>
            <person name="Dodson R.J."/>
            <person name="Daugherty S.C."/>
            <person name="Madupu R."/>
            <person name="Angiuoli S.V."/>
            <person name="Durkin A.S."/>
            <person name="Haft D.H."/>
            <person name="Vamathevan J.J."/>
            <person name="Khouri H."/>
            <person name="Utterback T.R."/>
            <person name="Lee C."/>
            <person name="Dimitrov G."/>
            <person name="Jiang L."/>
            <person name="Qin H."/>
            <person name="Weidman J."/>
            <person name="Tran K."/>
            <person name="Kang K.H."/>
            <person name="Hance I.R."/>
            <person name="Nelson K.E."/>
            <person name="Fraser C.M."/>
        </authorList>
    </citation>
    <scope>NUCLEOTIDE SEQUENCE [LARGE SCALE GENOMIC DNA]</scope>
    <source>
        <strain>COL</strain>
    </source>
</reference>
<comment type="catalytic activity">
    <reaction evidence="1">
        <text>(S)-malate + a quinone = a quinol + oxaloacetate</text>
        <dbReference type="Rhea" id="RHEA:46012"/>
        <dbReference type="ChEBI" id="CHEBI:15589"/>
        <dbReference type="ChEBI" id="CHEBI:16452"/>
        <dbReference type="ChEBI" id="CHEBI:24646"/>
        <dbReference type="ChEBI" id="CHEBI:132124"/>
        <dbReference type="EC" id="1.1.5.4"/>
    </reaction>
</comment>
<comment type="cofactor">
    <cofactor evidence="1">
        <name>FAD</name>
        <dbReference type="ChEBI" id="CHEBI:57692"/>
    </cofactor>
</comment>
<comment type="pathway">
    <text evidence="1">Carbohydrate metabolism; tricarboxylic acid cycle; oxaloacetate from (S)-malate (quinone route): step 1/1.</text>
</comment>
<comment type="similarity">
    <text evidence="1">Belongs to the MQO family.</text>
</comment>
<sequence length="498" mass="55999">MAKSNSKDIVLIGAGVLSTTFGSMLKEIEPDWNIHVYERLDRPAIESSNERNNAGTGHAALCELNYTVLQPDGSIDIEKAKVINEEFEISKQFWGHLVKSGSIENPREFINPLPHISYVRGKNNVKFLKDRYEAMKAFPMFDNIEYTEDIEVMKKWIPLMMKGREDNPGIMAASKIDEGTDVNFGELTRKMAKSIEAHPNATVQFNHEVVDFEQLSNGQWEVTVKNRLTGEKFKQVTDYVFIGAGGGAIPLLQKTGIPESKHLGGFPISGQFLACTNPQVIEQHDAKVYGKEPPGTPPMTVPHLDTRYIDGQRTLLFGPFANVGPKFLKNGSNLDLFKSVKTYNITTLLAAAVKNLPLIKYSFDQVIMTKEGCMNHLRTFYPEARNEDWQLYTAGKRVQVIKDTPEHGKGFIQFGTEVVNSQDHTVIALLGESPGASTSVSVALEVLERNFPEYKTEWAPKIKKMIPSYGESLIEDEKLMRKIRKQTSKDLELGYYEN</sequence>